<organism>
    <name type="scientific">Mus musculus</name>
    <name type="common">Mouse</name>
    <dbReference type="NCBI Taxonomy" id="10090"/>
    <lineage>
        <taxon>Eukaryota</taxon>
        <taxon>Metazoa</taxon>
        <taxon>Chordata</taxon>
        <taxon>Craniata</taxon>
        <taxon>Vertebrata</taxon>
        <taxon>Euteleostomi</taxon>
        <taxon>Mammalia</taxon>
        <taxon>Eutheria</taxon>
        <taxon>Euarchontoglires</taxon>
        <taxon>Glires</taxon>
        <taxon>Rodentia</taxon>
        <taxon>Myomorpha</taxon>
        <taxon>Muroidea</taxon>
        <taxon>Muridae</taxon>
        <taxon>Murinae</taxon>
        <taxon>Mus</taxon>
        <taxon>Mus</taxon>
    </lineage>
</organism>
<sequence length="146" mass="15476">MYACSKFVSTRSLIRSTSLRSTSQLLSRPLSAVELKRPQMPTDESLSSLAVRRPLTSLIPSRSFQTSAISRDIDTAAKFIGAGAATVGVAGSGAGIGTVFGSLIIGYARNPSLKQQLFSYAILGFALSEAMGLFCLMVAFLILFAM</sequence>
<protein>
    <recommendedName>
        <fullName evidence="5">ATP synthase F(0) complex subunit C2, mitochondrial</fullName>
    </recommendedName>
    <alternativeName>
        <fullName>ATP synthase lipid-binding protein</fullName>
    </alternativeName>
    <alternativeName>
        <fullName evidence="2">ATP synthase membrane subunit c locus 2</fullName>
    </alternativeName>
    <alternativeName>
        <fullName>ATP synthase proteolipid P2</fullName>
    </alternativeName>
    <alternativeName>
        <fullName>ATPase protein 9</fullName>
    </alternativeName>
    <alternativeName>
        <fullName>ATPase subunit c</fullName>
    </alternativeName>
</protein>
<accession>P56383</accession>
<accession>Q3KQM0</accession>
<accession>Q9CQ23</accession>
<reference key="1">
    <citation type="journal article" date="2005" name="Science">
        <title>The transcriptional landscape of the mammalian genome.</title>
        <authorList>
            <person name="Carninci P."/>
            <person name="Kasukawa T."/>
            <person name="Katayama S."/>
            <person name="Gough J."/>
            <person name="Frith M.C."/>
            <person name="Maeda N."/>
            <person name="Oyama R."/>
            <person name="Ravasi T."/>
            <person name="Lenhard B."/>
            <person name="Wells C."/>
            <person name="Kodzius R."/>
            <person name="Shimokawa K."/>
            <person name="Bajic V.B."/>
            <person name="Brenner S.E."/>
            <person name="Batalov S."/>
            <person name="Forrest A.R."/>
            <person name="Zavolan M."/>
            <person name="Davis M.J."/>
            <person name="Wilming L.G."/>
            <person name="Aidinis V."/>
            <person name="Allen J.E."/>
            <person name="Ambesi-Impiombato A."/>
            <person name="Apweiler R."/>
            <person name="Aturaliya R.N."/>
            <person name="Bailey T.L."/>
            <person name="Bansal M."/>
            <person name="Baxter L."/>
            <person name="Beisel K.W."/>
            <person name="Bersano T."/>
            <person name="Bono H."/>
            <person name="Chalk A.M."/>
            <person name="Chiu K.P."/>
            <person name="Choudhary V."/>
            <person name="Christoffels A."/>
            <person name="Clutterbuck D.R."/>
            <person name="Crowe M.L."/>
            <person name="Dalla E."/>
            <person name="Dalrymple B.P."/>
            <person name="de Bono B."/>
            <person name="Della Gatta G."/>
            <person name="di Bernardo D."/>
            <person name="Down T."/>
            <person name="Engstrom P."/>
            <person name="Fagiolini M."/>
            <person name="Faulkner G."/>
            <person name="Fletcher C.F."/>
            <person name="Fukushima T."/>
            <person name="Furuno M."/>
            <person name="Futaki S."/>
            <person name="Gariboldi M."/>
            <person name="Georgii-Hemming P."/>
            <person name="Gingeras T.R."/>
            <person name="Gojobori T."/>
            <person name="Green R.E."/>
            <person name="Gustincich S."/>
            <person name="Harbers M."/>
            <person name="Hayashi Y."/>
            <person name="Hensch T.K."/>
            <person name="Hirokawa N."/>
            <person name="Hill D."/>
            <person name="Huminiecki L."/>
            <person name="Iacono M."/>
            <person name="Ikeo K."/>
            <person name="Iwama A."/>
            <person name="Ishikawa T."/>
            <person name="Jakt M."/>
            <person name="Kanapin A."/>
            <person name="Katoh M."/>
            <person name="Kawasawa Y."/>
            <person name="Kelso J."/>
            <person name="Kitamura H."/>
            <person name="Kitano H."/>
            <person name="Kollias G."/>
            <person name="Krishnan S.P."/>
            <person name="Kruger A."/>
            <person name="Kummerfeld S.K."/>
            <person name="Kurochkin I.V."/>
            <person name="Lareau L.F."/>
            <person name="Lazarevic D."/>
            <person name="Lipovich L."/>
            <person name="Liu J."/>
            <person name="Liuni S."/>
            <person name="McWilliam S."/>
            <person name="Madan Babu M."/>
            <person name="Madera M."/>
            <person name="Marchionni L."/>
            <person name="Matsuda H."/>
            <person name="Matsuzawa S."/>
            <person name="Miki H."/>
            <person name="Mignone F."/>
            <person name="Miyake S."/>
            <person name="Morris K."/>
            <person name="Mottagui-Tabar S."/>
            <person name="Mulder N."/>
            <person name="Nakano N."/>
            <person name="Nakauchi H."/>
            <person name="Ng P."/>
            <person name="Nilsson R."/>
            <person name="Nishiguchi S."/>
            <person name="Nishikawa S."/>
            <person name="Nori F."/>
            <person name="Ohara O."/>
            <person name="Okazaki Y."/>
            <person name="Orlando V."/>
            <person name="Pang K.C."/>
            <person name="Pavan W.J."/>
            <person name="Pavesi G."/>
            <person name="Pesole G."/>
            <person name="Petrovsky N."/>
            <person name="Piazza S."/>
            <person name="Reed J."/>
            <person name="Reid J.F."/>
            <person name="Ring B.Z."/>
            <person name="Ringwald M."/>
            <person name="Rost B."/>
            <person name="Ruan Y."/>
            <person name="Salzberg S.L."/>
            <person name="Sandelin A."/>
            <person name="Schneider C."/>
            <person name="Schoenbach C."/>
            <person name="Sekiguchi K."/>
            <person name="Semple C.A."/>
            <person name="Seno S."/>
            <person name="Sessa L."/>
            <person name="Sheng Y."/>
            <person name="Shibata Y."/>
            <person name="Shimada H."/>
            <person name="Shimada K."/>
            <person name="Silva D."/>
            <person name="Sinclair B."/>
            <person name="Sperling S."/>
            <person name="Stupka E."/>
            <person name="Sugiura K."/>
            <person name="Sultana R."/>
            <person name="Takenaka Y."/>
            <person name="Taki K."/>
            <person name="Tammoja K."/>
            <person name="Tan S.L."/>
            <person name="Tang S."/>
            <person name="Taylor M.S."/>
            <person name="Tegner J."/>
            <person name="Teichmann S.A."/>
            <person name="Ueda H.R."/>
            <person name="van Nimwegen E."/>
            <person name="Verardo R."/>
            <person name="Wei C.L."/>
            <person name="Yagi K."/>
            <person name="Yamanishi H."/>
            <person name="Zabarovsky E."/>
            <person name="Zhu S."/>
            <person name="Zimmer A."/>
            <person name="Hide W."/>
            <person name="Bult C."/>
            <person name="Grimmond S.M."/>
            <person name="Teasdale R.D."/>
            <person name="Liu E.T."/>
            <person name="Brusic V."/>
            <person name="Quackenbush J."/>
            <person name="Wahlestedt C."/>
            <person name="Mattick J.S."/>
            <person name="Hume D.A."/>
            <person name="Kai C."/>
            <person name="Sasaki D."/>
            <person name="Tomaru Y."/>
            <person name="Fukuda S."/>
            <person name="Kanamori-Katayama M."/>
            <person name="Suzuki M."/>
            <person name="Aoki J."/>
            <person name="Arakawa T."/>
            <person name="Iida J."/>
            <person name="Imamura K."/>
            <person name="Itoh M."/>
            <person name="Kato T."/>
            <person name="Kawaji H."/>
            <person name="Kawagashira N."/>
            <person name="Kawashima T."/>
            <person name="Kojima M."/>
            <person name="Kondo S."/>
            <person name="Konno H."/>
            <person name="Nakano K."/>
            <person name="Ninomiya N."/>
            <person name="Nishio T."/>
            <person name="Okada M."/>
            <person name="Plessy C."/>
            <person name="Shibata K."/>
            <person name="Shiraki T."/>
            <person name="Suzuki S."/>
            <person name="Tagami M."/>
            <person name="Waki K."/>
            <person name="Watahiki A."/>
            <person name="Okamura-Oho Y."/>
            <person name="Suzuki H."/>
            <person name="Kawai J."/>
            <person name="Hayashizaki Y."/>
        </authorList>
    </citation>
    <scope>NUCLEOTIDE SEQUENCE [LARGE SCALE MRNA]</scope>
    <source>
        <strain>C57BL/6J</strain>
        <tissue>Kidney</tissue>
        <tissue>Pancreas</tissue>
    </source>
</reference>
<reference key="2">
    <citation type="journal article" date="2004" name="Genome Res.">
        <title>The status, quality, and expansion of the NIH full-length cDNA project: the Mammalian Gene Collection (MGC).</title>
        <authorList>
            <consortium name="The MGC Project Team"/>
        </authorList>
    </citation>
    <scope>NUCLEOTIDE SEQUENCE [LARGE SCALE MRNA]</scope>
    <source>
        <strain>129</strain>
        <strain>C57BL/6J</strain>
        <strain>FVB/N</strain>
        <tissue>Brain</tissue>
        <tissue>Colon</tissue>
        <tissue>Mammary tumor</tissue>
    </source>
</reference>
<reference key="3">
    <citation type="journal article" date="2019" name="J. Biol. Chem.">
        <title>Lysine methylation by the mitochondrial methyltransferase FAM173B optimizes the function of mitochondrial ATP synthase.</title>
        <authorList>
            <person name="Malecki J.M."/>
            <person name="Willemen H.L.D.M."/>
            <person name="Pinto R."/>
            <person name="Ho A.Y.Y."/>
            <person name="Moen A."/>
            <person name="Kjoenstad I.F."/>
            <person name="Burgering B.M.T."/>
            <person name="Zwartkruis F."/>
            <person name="Eijkelkamp N."/>
            <person name="Falnes P.O."/>
        </authorList>
    </citation>
    <scope>METHYLATION AT LYS-114</scope>
</reference>
<dbReference type="EMBL" id="AK002311">
    <property type="protein sequence ID" value="BAB22005.1"/>
    <property type="molecule type" value="mRNA"/>
</dbReference>
<dbReference type="EMBL" id="AK007747">
    <property type="protein sequence ID" value="BAB25231.1"/>
    <property type="molecule type" value="mRNA"/>
</dbReference>
<dbReference type="EMBL" id="AK012279">
    <property type="protein sequence ID" value="BAB28137.1"/>
    <property type="molecule type" value="mRNA"/>
</dbReference>
<dbReference type="EMBL" id="AK075793">
    <property type="protein sequence ID" value="BAC35962.1"/>
    <property type="molecule type" value="mRNA"/>
</dbReference>
<dbReference type="EMBL" id="BC006813">
    <property type="protein sequence ID" value="AAH06813.1"/>
    <property type="molecule type" value="mRNA"/>
</dbReference>
<dbReference type="EMBL" id="BC081437">
    <property type="protein sequence ID" value="AAH81437.1"/>
    <property type="molecule type" value="mRNA"/>
</dbReference>
<dbReference type="EMBL" id="BC106138">
    <property type="protein sequence ID" value="AAI06139.1"/>
    <property type="molecule type" value="mRNA"/>
</dbReference>
<dbReference type="CCDS" id="CCDS27888.1"/>
<dbReference type="RefSeq" id="NP_080744.1">
    <property type="nucleotide sequence ID" value="NM_026468.2"/>
</dbReference>
<dbReference type="SMR" id="P56383"/>
<dbReference type="BioGRID" id="212554">
    <property type="interactions" value="2"/>
</dbReference>
<dbReference type="FunCoup" id="P56383">
    <property type="interactions" value="588"/>
</dbReference>
<dbReference type="STRING" id="10090.ENSMUSP00000140414"/>
<dbReference type="GlyGen" id="P56383">
    <property type="glycosylation" value="1 site, 1 O-linked glycan (1 site)"/>
</dbReference>
<dbReference type="iPTMnet" id="P56383"/>
<dbReference type="PhosphoSitePlus" id="P56383"/>
<dbReference type="SwissPalm" id="P56383"/>
<dbReference type="jPOST" id="P56383"/>
<dbReference type="PaxDb" id="10090-ENSMUSP00000136537"/>
<dbReference type="PeptideAtlas" id="P56383"/>
<dbReference type="ProteomicsDB" id="277057"/>
<dbReference type="Pumba" id="P56383"/>
<dbReference type="TopDownProteomics" id="P56383"/>
<dbReference type="DNASU" id="67942"/>
<dbReference type="Ensembl" id="ENSMUST00000075630.10">
    <property type="protein sequence ID" value="ENSMUSP00000075057.4"/>
    <property type="gene ID" value="ENSMUSG00000062683.12"/>
</dbReference>
<dbReference type="Ensembl" id="ENSMUST00000185641.7">
    <property type="protein sequence ID" value="ENSMUSP00000140414.2"/>
    <property type="gene ID" value="ENSMUSG00000062683.12"/>
</dbReference>
<dbReference type="GeneID" id="67942"/>
<dbReference type="KEGG" id="mmu:67942"/>
<dbReference type="UCSC" id="uc007xwr.1">
    <property type="organism name" value="mouse"/>
</dbReference>
<dbReference type="AGR" id="MGI:1915192"/>
<dbReference type="CTD" id="517"/>
<dbReference type="MGI" id="MGI:1915192">
    <property type="gene designation" value="Atp5mc2"/>
</dbReference>
<dbReference type="VEuPathDB" id="HostDB:ENSMUSG00000062683"/>
<dbReference type="eggNOG" id="KOG3025">
    <property type="taxonomic scope" value="Eukaryota"/>
</dbReference>
<dbReference type="GeneTree" id="ENSGT00940000157455"/>
<dbReference type="HOGENOM" id="CLU_116822_1_0_1"/>
<dbReference type="InParanoid" id="P56383"/>
<dbReference type="OMA" id="MYTCSRF"/>
<dbReference type="OrthoDB" id="438052at2759"/>
<dbReference type="PhylomeDB" id="P56383"/>
<dbReference type="TreeFam" id="TF300140"/>
<dbReference type="Reactome" id="R-MMU-163210">
    <property type="pathway name" value="Formation of ATP by chemiosmotic coupling"/>
</dbReference>
<dbReference type="Reactome" id="R-MMU-8949613">
    <property type="pathway name" value="Cristae formation"/>
</dbReference>
<dbReference type="BioGRID-ORCS" id="67942">
    <property type="hits" value="4 hits in 79 CRISPR screens"/>
</dbReference>
<dbReference type="ChiTaRS" id="Atp5g2">
    <property type="organism name" value="mouse"/>
</dbReference>
<dbReference type="PRO" id="PR:P56383"/>
<dbReference type="Proteomes" id="UP000000589">
    <property type="component" value="Chromosome 15"/>
</dbReference>
<dbReference type="RNAct" id="P56383">
    <property type="molecule type" value="protein"/>
</dbReference>
<dbReference type="Bgee" id="ENSMUSG00000062683">
    <property type="expression patterns" value="Expressed in mesodermal cell in embryo and 76 other cell types or tissues"/>
</dbReference>
<dbReference type="ExpressionAtlas" id="P56383">
    <property type="expression patterns" value="baseline and differential"/>
</dbReference>
<dbReference type="GO" id="GO:0031966">
    <property type="term" value="C:mitochondrial membrane"/>
    <property type="evidence" value="ECO:0007669"/>
    <property type="project" value="UniProtKB-SubCell"/>
</dbReference>
<dbReference type="GO" id="GO:0005739">
    <property type="term" value="C:mitochondrion"/>
    <property type="evidence" value="ECO:0007005"/>
    <property type="project" value="MGI"/>
</dbReference>
<dbReference type="GO" id="GO:0045259">
    <property type="term" value="C:proton-transporting ATP synthase complex"/>
    <property type="evidence" value="ECO:0007669"/>
    <property type="project" value="UniProtKB-KW"/>
</dbReference>
<dbReference type="GO" id="GO:0033177">
    <property type="term" value="C:proton-transporting two-sector ATPase complex, proton-transporting domain"/>
    <property type="evidence" value="ECO:0007669"/>
    <property type="project" value="InterPro"/>
</dbReference>
<dbReference type="GO" id="GO:0008289">
    <property type="term" value="F:lipid binding"/>
    <property type="evidence" value="ECO:0007669"/>
    <property type="project" value="UniProtKB-KW"/>
</dbReference>
<dbReference type="GO" id="GO:0015078">
    <property type="term" value="F:proton transmembrane transporter activity"/>
    <property type="evidence" value="ECO:0007669"/>
    <property type="project" value="InterPro"/>
</dbReference>
<dbReference type="GO" id="GO:0015986">
    <property type="term" value="P:proton motive force-driven ATP synthesis"/>
    <property type="evidence" value="ECO:0007669"/>
    <property type="project" value="InterPro"/>
</dbReference>
<dbReference type="CDD" id="cd18182">
    <property type="entry name" value="ATP-synt_Fo_c_ATP5G3"/>
    <property type="match status" value="1"/>
</dbReference>
<dbReference type="FunFam" id="1.20.20.10:FF:000003">
    <property type="entry name" value="Atp synthase f complex subunit mitochondrial"/>
    <property type="match status" value="1"/>
</dbReference>
<dbReference type="Gene3D" id="1.20.20.10">
    <property type="entry name" value="F1F0 ATP synthase subunit C"/>
    <property type="match status" value="1"/>
</dbReference>
<dbReference type="HAMAP" id="MF_01396">
    <property type="entry name" value="ATP_synth_c_bact"/>
    <property type="match status" value="1"/>
</dbReference>
<dbReference type="InterPro" id="IPR000454">
    <property type="entry name" value="ATP_synth_F0_csu"/>
</dbReference>
<dbReference type="InterPro" id="IPR020537">
    <property type="entry name" value="ATP_synth_F0_csu_DDCD_BS"/>
</dbReference>
<dbReference type="InterPro" id="IPR038662">
    <property type="entry name" value="ATP_synth_F0_csu_sf"/>
</dbReference>
<dbReference type="InterPro" id="IPR002379">
    <property type="entry name" value="ATPase_proteolipid_c-like_dom"/>
</dbReference>
<dbReference type="InterPro" id="IPR035921">
    <property type="entry name" value="F/V-ATP_Csub_sf"/>
</dbReference>
<dbReference type="PANTHER" id="PTHR10031:SF54">
    <property type="entry name" value="ATP SYNTHASE F(0) COMPLEX SUBUNIT C2, MITOCHONDRIAL"/>
    <property type="match status" value="1"/>
</dbReference>
<dbReference type="PANTHER" id="PTHR10031">
    <property type="entry name" value="ATP SYNTHASE LIPID-BINDING PROTEIN, MITOCHONDRIAL"/>
    <property type="match status" value="1"/>
</dbReference>
<dbReference type="Pfam" id="PF00137">
    <property type="entry name" value="ATP-synt_C"/>
    <property type="match status" value="1"/>
</dbReference>
<dbReference type="PRINTS" id="PR00124">
    <property type="entry name" value="ATPASEC"/>
</dbReference>
<dbReference type="SUPFAM" id="SSF81333">
    <property type="entry name" value="F1F0 ATP synthase subunit C"/>
    <property type="match status" value="1"/>
</dbReference>
<dbReference type="PROSITE" id="PS00605">
    <property type="entry name" value="ATPASE_C"/>
    <property type="match status" value="1"/>
</dbReference>
<comment type="function">
    <text>Mitochondrial membrane ATP synthase (F(1)F(0) ATP synthase or Complex V) produces ATP from ADP in the presence of a proton gradient across the membrane which is generated by electron transport complexes of the respiratory chain. F-type ATPases consist of two structural domains, F(1) - containing the extramembraneous catalytic core and F(0) - containing the membrane proton channel, linked together by a central stalk and a peripheral stalk. During catalysis, ATP synthesis in the catalytic domain of F(1) is coupled via a rotary mechanism of the central stalk subunits to proton translocation. Part of the complex F(0) domain. A homomeric c-ring of probably 10 subunits is part of the complex rotary element.</text>
</comment>
<comment type="subunit">
    <text evidence="2">F-type ATPases have 2 components, CF(1) - the catalytic core - and CF(0) - the membrane proton channel. CF(1) has five subunits: alpha(3), beta(3), gamma(1), delta(1), epsilon(1). CF(0) has three main subunits: a, b and c. Interacts with DNAJC30; interaction is direct.</text>
</comment>
<comment type="subcellular location">
    <subcellularLocation>
        <location>Mitochondrion membrane</location>
        <topology>Multi-pass membrane protein</topology>
    </subcellularLocation>
</comment>
<comment type="PTM">
    <text evidence="4">Trimethylated by ATPSCKMT at Lys-114. Methylation is required for proper incorporation of the C subunit into the ATP synthase complex and mitochondrial respiration.</text>
</comment>
<comment type="disease">
    <text>This protein is the major protein stored in the storage bodies of animals or humans affected with ceroid lipofuscinosis (Batten disease).</text>
</comment>
<comment type="miscellaneous">
    <text evidence="5">There are three genes which encode the mitochondrial ATP synthase proteolipid and they specify precursors with different import sequences but identical mature proteins.</text>
</comment>
<comment type="similarity">
    <text evidence="5">Belongs to the ATPase C chain family.</text>
</comment>
<evidence type="ECO:0000250" key="1"/>
<evidence type="ECO:0000250" key="2">
    <source>
        <dbReference type="UniProtKB" id="Q06055"/>
    </source>
</evidence>
<evidence type="ECO:0000255" key="3"/>
<evidence type="ECO:0000269" key="4">
    <source>
    </source>
</evidence>
<evidence type="ECO:0000305" key="5"/>
<name>AT5G2_MOUSE</name>
<gene>
    <name evidence="2" type="primary">Atp5mc2</name>
    <name type="synonym">Atp5g2</name>
</gene>
<keyword id="KW-0138">CF(0)</keyword>
<keyword id="KW-0375">Hydrogen ion transport</keyword>
<keyword id="KW-0406">Ion transport</keyword>
<keyword id="KW-0446">Lipid-binding</keyword>
<keyword id="KW-0472">Membrane</keyword>
<keyword id="KW-0488">Methylation</keyword>
<keyword id="KW-0496">Mitochondrion</keyword>
<keyword id="KW-1185">Reference proteome</keyword>
<keyword id="KW-0809">Transit peptide</keyword>
<keyword id="KW-0812">Transmembrane</keyword>
<keyword id="KW-1133">Transmembrane helix</keyword>
<keyword id="KW-0813">Transport</keyword>
<feature type="transit peptide" description="Mitochondrion" evidence="1">
    <location>
        <begin position="1"/>
        <end position="71"/>
    </location>
</feature>
<feature type="chain" id="PRO_0000002563" description="ATP synthase F(0) complex subunit C2, mitochondrial">
    <location>
        <begin position="72"/>
        <end position="146"/>
    </location>
</feature>
<feature type="transmembrane region" description="Helical" evidence="3">
    <location>
        <begin position="87"/>
        <end position="107"/>
    </location>
</feature>
<feature type="transmembrane region" description="Helical" evidence="3">
    <location>
        <begin position="122"/>
        <end position="142"/>
    </location>
</feature>
<feature type="site" description="Reversibly protonated during proton transport" evidence="1">
    <location>
        <position position="129"/>
    </location>
</feature>
<feature type="modified residue" description="N6,N6,N6-trimethyllysine" evidence="4">
    <location>
        <position position="114"/>
    </location>
</feature>
<proteinExistence type="evidence at protein level"/>